<name>RL13_PYRFU</name>
<keyword id="KW-0002">3D-structure</keyword>
<keyword id="KW-1185">Reference proteome</keyword>
<keyword id="KW-0687">Ribonucleoprotein</keyword>
<keyword id="KW-0689">Ribosomal protein</keyword>
<reference key="1">
    <citation type="journal article" date="1999" name="Genetics">
        <title>Divergence of the hyperthermophilic archaea Pyrococcus furiosus and P. horikoshii inferred from complete genomic sequences.</title>
        <authorList>
            <person name="Maeder D.L."/>
            <person name="Weiss R.B."/>
            <person name="Dunn D.M."/>
            <person name="Cherry J.L."/>
            <person name="Gonzalez J.M."/>
            <person name="DiRuggiero J."/>
            <person name="Robb F.T."/>
        </authorList>
    </citation>
    <scope>NUCLEOTIDE SEQUENCE [LARGE SCALE GENOMIC DNA]</scope>
    <source>
        <strain>ATCC 43587 / DSM 3638 / JCM 8422 / Vc1</strain>
    </source>
</reference>
<reference evidence="3" key="2">
    <citation type="journal article" date="2013" name="Nucleic Acids Res.">
        <title>Promiscuous behaviour of archaeal ribosomal proteins: implications for eukaryotic ribosome evolution.</title>
        <authorList>
            <person name="Armache J.P."/>
            <person name="Anger A.M."/>
            <person name="Marquez V."/>
            <person name="Franckenberg S."/>
            <person name="Frohlich T."/>
            <person name="Villa E."/>
            <person name="Berninghausen O."/>
            <person name="Thomm M."/>
            <person name="Arnold G.J."/>
            <person name="Beckmann R."/>
            <person name="Wilson D.N."/>
        </authorList>
    </citation>
    <scope>STRUCTURE BY ELECTRON MICROSCOPY (6.60 ANGSTROMS) IN THE 70S RIBOSOME</scope>
    <scope>SUBUNIT</scope>
</reference>
<feature type="chain" id="PRO_0000261849" description="Large ribosomal subunit protein uL13">
    <location>
        <begin position="1"/>
        <end position="142"/>
    </location>
</feature>
<gene>
    <name evidence="1" type="primary">rpl13</name>
    <name type="ordered locus">PF1645</name>
</gene>
<accession>Q8U0E6</accession>
<evidence type="ECO:0000255" key="1">
    <source>
        <dbReference type="HAMAP-Rule" id="MF_01366"/>
    </source>
</evidence>
<evidence type="ECO:0000269" key="2">
    <source>
    </source>
</evidence>
<evidence type="ECO:0007744" key="3">
    <source>
        <dbReference type="PDB" id="4V6U"/>
    </source>
</evidence>
<dbReference type="EMBL" id="AE009950">
    <property type="protein sequence ID" value="AAL81769.1"/>
    <property type="molecule type" value="Genomic_DNA"/>
</dbReference>
<dbReference type="PDB" id="4V4N">
    <property type="method" value="EM"/>
    <property type="resolution" value="9.00 A"/>
    <property type="chains" value="I=1-142"/>
</dbReference>
<dbReference type="PDB" id="4V6U">
    <property type="method" value="EM"/>
    <property type="resolution" value="6.60 A"/>
    <property type="chains" value="BI=1-142"/>
</dbReference>
<dbReference type="PDBsum" id="4V4N"/>
<dbReference type="PDBsum" id="4V6U"/>
<dbReference type="SMR" id="Q8U0E6"/>
<dbReference type="STRING" id="186497.PF1645"/>
<dbReference type="PaxDb" id="186497-PF1645"/>
<dbReference type="KEGG" id="pfu:PF1645"/>
<dbReference type="PATRIC" id="fig|186497.12.peg.1711"/>
<dbReference type="eggNOG" id="arCOG04242">
    <property type="taxonomic scope" value="Archaea"/>
</dbReference>
<dbReference type="HOGENOM" id="CLU_076922_1_0_2"/>
<dbReference type="OrthoDB" id="7668at2157"/>
<dbReference type="PhylomeDB" id="Q8U0E6"/>
<dbReference type="Proteomes" id="UP000001013">
    <property type="component" value="Chromosome"/>
</dbReference>
<dbReference type="GO" id="GO:0022625">
    <property type="term" value="C:cytosolic large ribosomal subunit"/>
    <property type="evidence" value="ECO:0007669"/>
    <property type="project" value="TreeGrafter"/>
</dbReference>
<dbReference type="GO" id="GO:0003729">
    <property type="term" value="F:mRNA binding"/>
    <property type="evidence" value="ECO:0007669"/>
    <property type="project" value="TreeGrafter"/>
</dbReference>
<dbReference type="GO" id="GO:0003735">
    <property type="term" value="F:structural constituent of ribosome"/>
    <property type="evidence" value="ECO:0007669"/>
    <property type="project" value="InterPro"/>
</dbReference>
<dbReference type="GO" id="GO:0017148">
    <property type="term" value="P:negative regulation of translation"/>
    <property type="evidence" value="ECO:0007669"/>
    <property type="project" value="TreeGrafter"/>
</dbReference>
<dbReference type="GO" id="GO:0006412">
    <property type="term" value="P:translation"/>
    <property type="evidence" value="ECO:0007669"/>
    <property type="project" value="UniProtKB-UniRule"/>
</dbReference>
<dbReference type="FunFam" id="3.90.1180.10:FF:000012">
    <property type="entry name" value="50S ribosomal protein L13"/>
    <property type="match status" value="1"/>
</dbReference>
<dbReference type="Gene3D" id="3.90.1180.10">
    <property type="entry name" value="Ribosomal protein L13"/>
    <property type="match status" value="1"/>
</dbReference>
<dbReference type="HAMAP" id="MF_01366">
    <property type="entry name" value="Ribosomal_uL13"/>
    <property type="match status" value="1"/>
</dbReference>
<dbReference type="InterPro" id="IPR005822">
    <property type="entry name" value="Ribosomal_uL13"/>
</dbReference>
<dbReference type="InterPro" id="IPR005823">
    <property type="entry name" value="Ribosomal_uL13_bac-type"/>
</dbReference>
<dbReference type="InterPro" id="IPR023563">
    <property type="entry name" value="Ribosomal_uL13_CS"/>
</dbReference>
<dbReference type="InterPro" id="IPR005755">
    <property type="entry name" value="Ribosomal_uL13_euk/arc"/>
</dbReference>
<dbReference type="InterPro" id="IPR036899">
    <property type="entry name" value="Ribosomal_uL13_sf"/>
</dbReference>
<dbReference type="NCBIfam" id="TIGR01077">
    <property type="entry name" value="L13_A_E"/>
    <property type="match status" value="1"/>
</dbReference>
<dbReference type="NCBIfam" id="NF005004">
    <property type="entry name" value="PRK06394.1"/>
    <property type="match status" value="1"/>
</dbReference>
<dbReference type="PANTHER" id="PTHR11545:SF3">
    <property type="entry name" value="LARGE RIBOSOMAL SUBUNIT PROTEIN UL13"/>
    <property type="match status" value="1"/>
</dbReference>
<dbReference type="PANTHER" id="PTHR11545">
    <property type="entry name" value="RIBOSOMAL PROTEIN L13"/>
    <property type="match status" value="1"/>
</dbReference>
<dbReference type="Pfam" id="PF00572">
    <property type="entry name" value="Ribosomal_L13"/>
    <property type="match status" value="1"/>
</dbReference>
<dbReference type="PIRSF" id="PIRSF002181">
    <property type="entry name" value="Ribosomal_L13"/>
    <property type="match status" value="1"/>
</dbReference>
<dbReference type="SUPFAM" id="SSF52161">
    <property type="entry name" value="Ribosomal protein L13"/>
    <property type="match status" value="1"/>
</dbReference>
<dbReference type="PROSITE" id="PS00783">
    <property type="entry name" value="RIBOSOMAL_L13"/>
    <property type="match status" value="1"/>
</dbReference>
<proteinExistence type="evidence at protein level"/>
<comment type="function">
    <text evidence="1">This protein is one of the early assembly proteins of the 50S ribosomal subunit, although it is not seen to bind rRNA by itself. It is important during the early stages of 50S assembly.</text>
</comment>
<comment type="subunit">
    <text evidence="1 2">Part of the 50S ribosomal subunit.</text>
</comment>
<comment type="similarity">
    <text evidence="1">Belongs to the universal ribosomal protein uL13 family.</text>
</comment>
<sequence length="142" mass="16312">MRIINAEGLILGRLASKVAKMLLEGEEVVIVNAEKAVITGNRDVIFKKYKQRTELRTLTNPRRGPFYPKRSDEIVRRTIRGMLPWKTDRGRKAFKRLKVYVGIPKEFQGKELETIIEAHVSRLSRPKYVTVGEVAKFLGGKF</sequence>
<protein>
    <recommendedName>
        <fullName evidence="1">Large ribosomal subunit protein uL13</fullName>
    </recommendedName>
    <alternativeName>
        <fullName>50S ribosomal protein L13</fullName>
    </alternativeName>
</protein>
<organism>
    <name type="scientific">Pyrococcus furiosus (strain ATCC 43587 / DSM 3638 / JCM 8422 / Vc1)</name>
    <dbReference type="NCBI Taxonomy" id="186497"/>
    <lineage>
        <taxon>Archaea</taxon>
        <taxon>Methanobacteriati</taxon>
        <taxon>Methanobacteriota</taxon>
        <taxon>Thermococci</taxon>
        <taxon>Thermococcales</taxon>
        <taxon>Thermococcaceae</taxon>
        <taxon>Pyrococcus</taxon>
    </lineage>
</organism>